<sequence length="168" mass="19558">MPRSQINGNFIDKTFSIVANILLRIIPTTSGEKEAFTYYRDGMSAQSEGNYAEALQNYYEAMRLEIDPYDRSYILYNIGLIHTSNGEHTKALEYYFRALERNPFLPQAFNNMAVICHYRGEQAIRQGDSEIAEAWFDQAAEYWKQAIALTPGNYIEAQNWLKITRRFE</sequence>
<keyword id="KW-0150">Chloroplast</keyword>
<keyword id="KW-0472">Membrane</keyword>
<keyword id="KW-0602">Photosynthesis</keyword>
<keyword id="KW-0934">Plastid</keyword>
<keyword id="KW-0677">Repeat</keyword>
<keyword id="KW-0793">Thylakoid</keyword>
<keyword id="KW-0802">TPR repeat</keyword>
<evidence type="ECO:0000255" key="1">
    <source>
        <dbReference type="HAMAP-Rule" id="MF_00439"/>
    </source>
</evidence>
<organism>
    <name type="scientific">Gossypium barbadense</name>
    <name type="common">Sea Island cotton</name>
    <name type="synonym">Hibiscus barbadensis</name>
    <dbReference type="NCBI Taxonomy" id="3634"/>
    <lineage>
        <taxon>Eukaryota</taxon>
        <taxon>Viridiplantae</taxon>
        <taxon>Streptophyta</taxon>
        <taxon>Embryophyta</taxon>
        <taxon>Tracheophyta</taxon>
        <taxon>Spermatophyta</taxon>
        <taxon>Magnoliopsida</taxon>
        <taxon>eudicotyledons</taxon>
        <taxon>Gunneridae</taxon>
        <taxon>Pentapetalae</taxon>
        <taxon>rosids</taxon>
        <taxon>malvids</taxon>
        <taxon>Malvales</taxon>
        <taxon>Malvaceae</taxon>
        <taxon>Malvoideae</taxon>
        <taxon>Gossypium</taxon>
    </lineage>
</organism>
<gene>
    <name evidence="1" type="primary">ycf3</name>
</gene>
<protein>
    <recommendedName>
        <fullName evidence="1">Photosystem I assembly protein Ycf3</fullName>
    </recommendedName>
</protein>
<accession>A0ZZ36</accession>
<feature type="chain" id="PRO_0000275619" description="Photosystem I assembly protein Ycf3">
    <location>
        <begin position="1"/>
        <end position="168"/>
    </location>
</feature>
<feature type="repeat" description="TPR 1">
    <location>
        <begin position="35"/>
        <end position="68"/>
    </location>
</feature>
<feature type="repeat" description="TPR 2">
    <location>
        <begin position="72"/>
        <end position="105"/>
    </location>
</feature>
<feature type="repeat" description="TPR 3">
    <location>
        <begin position="120"/>
        <end position="153"/>
    </location>
</feature>
<name>YCF3_GOSBA</name>
<reference key="1">
    <citation type="journal article" date="2006" name="Genes Genet. Syst.">
        <title>Complete nucleotide sequence of the cotton (Gossypium barbadense L.) chloroplast genome with a comparative analysis of sequences among 9 dicot plants.</title>
        <authorList>
            <person name="Ibrahim R.I.H."/>
            <person name="Azuma J."/>
            <person name="Sakamoto M."/>
        </authorList>
    </citation>
    <scope>NUCLEOTIDE SEQUENCE [LARGE SCALE GENOMIC DNA]</scope>
</reference>
<geneLocation type="chloroplast"/>
<proteinExistence type="inferred from homology"/>
<dbReference type="EMBL" id="AP009123">
    <property type="protein sequence ID" value="BAF41248.1"/>
    <property type="molecule type" value="Genomic_DNA"/>
</dbReference>
<dbReference type="RefSeq" id="YP_913188.1">
    <property type="nucleotide sequence ID" value="NC_008641.1"/>
</dbReference>
<dbReference type="SMR" id="A0ZZ36"/>
<dbReference type="GeneID" id="4575308"/>
<dbReference type="GO" id="GO:0009535">
    <property type="term" value="C:chloroplast thylakoid membrane"/>
    <property type="evidence" value="ECO:0007669"/>
    <property type="project" value="UniProtKB-SubCell"/>
</dbReference>
<dbReference type="GO" id="GO:0015979">
    <property type="term" value="P:photosynthesis"/>
    <property type="evidence" value="ECO:0007669"/>
    <property type="project" value="UniProtKB-UniRule"/>
</dbReference>
<dbReference type="FunFam" id="1.25.40.10:FF:000004">
    <property type="entry name" value="Photosystem I assembly protein Ycf3"/>
    <property type="match status" value="1"/>
</dbReference>
<dbReference type="Gene3D" id="1.25.40.10">
    <property type="entry name" value="Tetratricopeptide repeat domain"/>
    <property type="match status" value="1"/>
</dbReference>
<dbReference type="HAMAP" id="MF_00439">
    <property type="entry name" value="Ycf3"/>
    <property type="match status" value="1"/>
</dbReference>
<dbReference type="InterPro" id="IPR022818">
    <property type="entry name" value="PSI_Ycf3_assembly"/>
</dbReference>
<dbReference type="InterPro" id="IPR011990">
    <property type="entry name" value="TPR-like_helical_dom_sf"/>
</dbReference>
<dbReference type="InterPro" id="IPR019734">
    <property type="entry name" value="TPR_rpt"/>
</dbReference>
<dbReference type="InterPro" id="IPR051685">
    <property type="entry name" value="Ycf3/AcsC/BcsC/TPR_MFPF"/>
</dbReference>
<dbReference type="NCBIfam" id="NF002725">
    <property type="entry name" value="PRK02603.1"/>
    <property type="match status" value="1"/>
</dbReference>
<dbReference type="PANTHER" id="PTHR44943">
    <property type="entry name" value="CELLULOSE SYNTHASE OPERON PROTEIN C"/>
    <property type="match status" value="1"/>
</dbReference>
<dbReference type="PANTHER" id="PTHR44943:SF8">
    <property type="entry name" value="TPR REPEAT-CONTAINING PROTEIN MJ0263"/>
    <property type="match status" value="1"/>
</dbReference>
<dbReference type="Pfam" id="PF00515">
    <property type="entry name" value="TPR_1"/>
    <property type="match status" value="1"/>
</dbReference>
<dbReference type="SMART" id="SM00028">
    <property type="entry name" value="TPR"/>
    <property type="match status" value="3"/>
</dbReference>
<dbReference type="SUPFAM" id="SSF48452">
    <property type="entry name" value="TPR-like"/>
    <property type="match status" value="1"/>
</dbReference>
<dbReference type="PROSITE" id="PS50005">
    <property type="entry name" value="TPR"/>
    <property type="match status" value="3"/>
</dbReference>
<dbReference type="PROSITE" id="PS50293">
    <property type="entry name" value="TPR_REGION"/>
    <property type="match status" value="2"/>
</dbReference>
<comment type="function">
    <text evidence="1">Essential for the assembly of the photosystem I (PSI) complex. May act as a chaperone-like factor to guide the assembly of the PSI subunits.</text>
</comment>
<comment type="subcellular location">
    <subcellularLocation>
        <location evidence="1">Plastid</location>
        <location evidence="1">Chloroplast thylakoid membrane</location>
        <topology evidence="1">Peripheral membrane protein</topology>
    </subcellularLocation>
</comment>
<comment type="similarity">
    <text evidence="1">Belongs to the Ycf3 family.</text>
</comment>